<gene>
    <name evidence="1" type="primary">yaiI</name>
    <name type="ordered locus">SSON_0363</name>
</gene>
<feature type="chain" id="PRO_0000241832" description="UPF0178 protein YaiI">
    <location>
        <begin position="1"/>
        <end position="152"/>
    </location>
</feature>
<comment type="similarity">
    <text evidence="1">Belongs to the UPF0178 family.</text>
</comment>
<comment type="sequence caution" evidence="2">
    <conflict type="erroneous initiation">
        <sequence resource="EMBL-CDS" id="AAZ87139"/>
    </conflict>
</comment>
<proteinExistence type="inferred from homology"/>
<organism>
    <name type="scientific">Shigella sonnei (strain Ss046)</name>
    <dbReference type="NCBI Taxonomy" id="300269"/>
    <lineage>
        <taxon>Bacteria</taxon>
        <taxon>Pseudomonadati</taxon>
        <taxon>Pseudomonadota</taxon>
        <taxon>Gammaproteobacteria</taxon>
        <taxon>Enterobacterales</taxon>
        <taxon>Enterobacteriaceae</taxon>
        <taxon>Shigella</taxon>
    </lineage>
</organism>
<keyword id="KW-1185">Reference proteome</keyword>
<evidence type="ECO:0000255" key="1">
    <source>
        <dbReference type="HAMAP-Rule" id="MF_00489"/>
    </source>
</evidence>
<evidence type="ECO:0000305" key="2"/>
<sequence>MTIWVDADACPNVIKEILYRAAERMQMPLVLVANQSLRVPPSRFIRTLRVAAGFDVADNEIVRQCEAGDLVITADIPLAAEAIEKGAAALNPRGERYTPATIRERLTMRDFMDTLRASGIQTGGPDSLSQRDRQAFAAELEKWWLEVQRSRG</sequence>
<accession>Q3Z523</accession>
<reference key="1">
    <citation type="journal article" date="2005" name="Nucleic Acids Res.">
        <title>Genome dynamics and diversity of Shigella species, the etiologic agents of bacillary dysentery.</title>
        <authorList>
            <person name="Yang F."/>
            <person name="Yang J."/>
            <person name="Zhang X."/>
            <person name="Chen L."/>
            <person name="Jiang Y."/>
            <person name="Yan Y."/>
            <person name="Tang X."/>
            <person name="Wang J."/>
            <person name="Xiong Z."/>
            <person name="Dong J."/>
            <person name="Xue Y."/>
            <person name="Zhu Y."/>
            <person name="Xu X."/>
            <person name="Sun L."/>
            <person name="Chen S."/>
            <person name="Nie H."/>
            <person name="Peng J."/>
            <person name="Xu J."/>
            <person name="Wang Y."/>
            <person name="Yuan Z."/>
            <person name="Wen Y."/>
            <person name="Yao Z."/>
            <person name="Shen Y."/>
            <person name="Qiang B."/>
            <person name="Hou Y."/>
            <person name="Yu J."/>
            <person name="Jin Q."/>
        </authorList>
    </citation>
    <scope>NUCLEOTIDE SEQUENCE [LARGE SCALE GENOMIC DNA]</scope>
    <source>
        <strain>Ss046</strain>
    </source>
</reference>
<protein>
    <recommendedName>
        <fullName evidence="1">UPF0178 protein YaiI</fullName>
    </recommendedName>
</protein>
<name>YAII_SHISS</name>
<dbReference type="EMBL" id="CP000038">
    <property type="protein sequence ID" value="AAZ87139.1"/>
    <property type="status" value="ALT_INIT"/>
    <property type="molecule type" value="Genomic_DNA"/>
</dbReference>
<dbReference type="RefSeq" id="WP_000158159.1">
    <property type="nucleotide sequence ID" value="NC_007384.1"/>
</dbReference>
<dbReference type="KEGG" id="ssn:SSON_0363"/>
<dbReference type="HOGENOM" id="CLU_106619_1_0_6"/>
<dbReference type="Proteomes" id="UP000002529">
    <property type="component" value="Chromosome"/>
</dbReference>
<dbReference type="CDD" id="cd18720">
    <property type="entry name" value="PIN_YqxD-like"/>
    <property type="match status" value="1"/>
</dbReference>
<dbReference type="HAMAP" id="MF_00489">
    <property type="entry name" value="UPF0178"/>
    <property type="match status" value="1"/>
</dbReference>
<dbReference type="InterPro" id="IPR003791">
    <property type="entry name" value="UPF0178"/>
</dbReference>
<dbReference type="NCBIfam" id="NF001095">
    <property type="entry name" value="PRK00124.1"/>
    <property type="match status" value="1"/>
</dbReference>
<dbReference type="PANTHER" id="PTHR35146">
    <property type="entry name" value="UPF0178 PROTEIN YAII"/>
    <property type="match status" value="1"/>
</dbReference>
<dbReference type="PANTHER" id="PTHR35146:SF1">
    <property type="entry name" value="UPF0178 PROTEIN YAII"/>
    <property type="match status" value="1"/>
</dbReference>
<dbReference type="Pfam" id="PF02639">
    <property type="entry name" value="DUF188"/>
    <property type="match status" value="1"/>
</dbReference>